<name>COBS_ALKOO</name>
<dbReference type="EC" id="2.7.8.26" evidence="1"/>
<dbReference type="EMBL" id="CP000853">
    <property type="protein sequence ID" value="ABW19744.1"/>
    <property type="molecule type" value="Genomic_DNA"/>
</dbReference>
<dbReference type="RefSeq" id="WP_012160053.1">
    <property type="nucleotide sequence ID" value="NC_009922.1"/>
</dbReference>
<dbReference type="STRING" id="350688.Clos_2209"/>
<dbReference type="KEGG" id="aoe:Clos_2209"/>
<dbReference type="eggNOG" id="COG0368">
    <property type="taxonomic scope" value="Bacteria"/>
</dbReference>
<dbReference type="HOGENOM" id="CLU_057426_1_2_9"/>
<dbReference type="OrthoDB" id="9794626at2"/>
<dbReference type="UniPathway" id="UPA00148">
    <property type="reaction ID" value="UER00238"/>
</dbReference>
<dbReference type="Proteomes" id="UP000000269">
    <property type="component" value="Chromosome"/>
</dbReference>
<dbReference type="GO" id="GO:0005886">
    <property type="term" value="C:plasma membrane"/>
    <property type="evidence" value="ECO:0007669"/>
    <property type="project" value="UniProtKB-SubCell"/>
</dbReference>
<dbReference type="GO" id="GO:0051073">
    <property type="term" value="F:adenosylcobinamide-GDP ribazoletransferase activity"/>
    <property type="evidence" value="ECO:0007669"/>
    <property type="project" value="UniProtKB-UniRule"/>
</dbReference>
<dbReference type="GO" id="GO:0008818">
    <property type="term" value="F:cobalamin 5'-phosphate synthase activity"/>
    <property type="evidence" value="ECO:0007669"/>
    <property type="project" value="UniProtKB-UniRule"/>
</dbReference>
<dbReference type="GO" id="GO:0009236">
    <property type="term" value="P:cobalamin biosynthetic process"/>
    <property type="evidence" value="ECO:0007669"/>
    <property type="project" value="UniProtKB-UniRule"/>
</dbReference>
<dbReference type="HAMAP" id="MF_00719">
    <property type="entry name" value="CobS"/>
    <property type="match status" value="1"/>
</dbReference>
<dbReference type="InterPro" id="IPR003805">
    <property type="entry name" value="CobS"/>
</dbReference>
<dbReference type="NCBIfam" id="TIGR00317">
    <property type="entry name" value="cobS"/>
    <property type="match status" value="1"/>
</dbReference>
<dbReference type="PANTHER" id="PTHR34148">
    <property type="entry name" value="ADENOSYLCOBINAMIDE-GDP RIBAZOLETRANSFERASE"/>
    <property type="match status" value="1"/>
</dbReference>
<dbReference type="PANTHER" id="PTHR34148:SF1">
    <property type="entry name" value="ADENOSYLCOBINAMIDE-GDP RIBAZOLETRANSFERASE"/>
    <property type="match status" value="1"/>
</dbReference>
<dbReference type="Pfam" id="PF02654">
    <property type="entry name" value="CobS"/>
    <property type="match status" value="1"/>
</dbReference>
<sequence length="243" mass="26757">MKSLLLMMTFFTRIPVTYPYDYDEKDFIKGVKFLPVIGLLIGILMYLPTLLAPYIHRPIIIVSIWALYFLITGGLHIDGLADTFDGIFSYRSKEEMLRIMKDSRIGAFGVLGILWLLILNLTLAYYTENMLLLLVPVVGRASAVFAASRTIYARSEGMGGAFIESCRTKEGVISIAFSLLLGSMVSIKGAIIPMGITFLGVAMLTKKISKILGGMTGDTIGATIEISQTLFMLSAYLLKSIII</sequence>
<protein>
    <recommendedName>
        <fullName evidence="1">Adenosylcobinamide-GDP ribazoletransferase</fullName>
        <ecNumber evidence="1">2.7.8.26</ecNumber>
    </recommendedName>
    <alternativeName>
        <fullName evidence="1">Cobalamin synthase</fullName>
    </alternativeName>
    <alternativeName>
        <fullName evidence="1">Cobalamin-5'-phosphate synthase</fullName>
    </alternativeName>
</protein>
<accession>A8MIW2</accession>
<gene>
    <name evidence="1" type="primary">cobS</name>
    <name type="ordered locus">Clos_2209</name>
</gene>
<proteinExistence type="inferred from homology"/>
<organism>
    <name type="scientific">Alkaliphilus oremlandii (strain OhILAs)</name>
    <name type="common">Clostridium oremlandii (strain OhILAs)</name>
    <dbReference type="NCBI Taxonomy" id="350688"/>
    <lineage>
        <taxon>Bacteria</taxon>
        <taxon>Bacillati</taxon>
        <taxon>Bacillota</taxon>
        <taxon>Clostridia</taxon>
        <taxon>Peptostreptococcales</taxon>
        <taxon>Natronincolaceae</taxon>
        <taxon>Alkaliphilus</taxon>
    </lineage>
</organism>
<comment type="function">
    <text evidence="1">Joins adenosylcobinamide-GDP and alpha-ribazole to generate adenosylcobalamin (Ado-cobalamin). Also synthesizes adenosylcobalamin 5'-phosphate from adenosylcobinamide-GDP and alpha-ribazole 5'-phosphate.</text>
</comment>
<comment type="catalytic activity">
    <reaction evidence="1">
        <text>alpha-ribazole + adenosylcob(III)inamide-GDP = adenosylcob(III)alamin + GMP + H(+)</text>
        <dbReference type="Rhea" id="RHEA:16049"/>
        <dbReference type="ChEBI" id="CHEBI:10329"/>
        <dbReference type="ChEBI" id="CHEBI:15378"/>
        <dbReference type="ChEBI" id="CHEBI:18408"/>
        <dbReference type="ChEBI" id="CHEBI:58115"/>
        <dbReference type="ChEBI" id="CHEBI:60487"/>
        <dbReference type="EC" id="2.7.8.26"/>
    </reaction>
</comment>
<comment type="catalytic activity">
    <reaction evidence="1">
        <text>alpha-ribazole 5'-phosphate + adenosylcob(III)inamide-GDP = adenosylcob(III)alamin 5'-phosphate + GMP + H(+)</text>
        <dbReference type="Rhea" id="RHEA:23560"/>
        <dbReference type="ChEBI" id="CHEBI:15378"/>
        <dbReference type="ChEBI" id="CHEBI:57918"/>
        <dbReference type="ChEBI" id="CHEBI:58115"/>
        <dbReference type="ChEBI" id="CHEBI:60487"/>
        <dbReference type="ChEBI" id="CHEBI:60493"/>
        <dbReference type="EC" id="2.7.8.26"/>
    </reaction>
</comment>
<comment type="cofactor">
    <cofactor evidence="1">
        <name>Mg(2+)</name>
        <dbReference type="ChEBI" id="CHEBI:18420"/>
    </cofactor>
</comment>
<comment type="pathway">
    <text evidence="1">Cofactor biosynthesis; adenosylcobalamin biosynthesis; adenosylcobalamin from cob(II)yrinate a,c-diamide: step 7/7.</text>
</comment>
<comment type="subcellular location">
    <subcellularLocation>
        <location evidence="1">Cell membrane</location>
        <topology evidence="1">Multi-pass membrane protein</topology>
    </subcellularLocation>
</comment>
<comment type="similarity">
    <text evidence="1">Belongs to the CobS family.</text>
</comment>
<feature type="chain" id="PRO_1000072775" description="Adenosylcobinamide-GDP ribazoletransferase">
    <location>
        <begin position="1"/>
        <end position="243"/>
    </location>
</feature>
<feature type="transmembrane region" description="Helical" evidence="1">
    <location>
        <begin position="33"/>
        <end position="53"/>
    </location>
</feature>
<feature type="transmembrane region" description="Helical" evidence="1">
    <location>
        <begin position="59"/>
        <end position="79"/>
    </location>
</feature>
<feature type="transmembrane region" description="Helical" evidence="1">
    <location>
        <begin position="105"/>
        <end position="125"/>
    </location>
</feature>
<feature type="transmembrane region" description="Helical" evidence="1">
    <location>
        <begin position="127"/>
        <end position="147"/>
    </location>
</feature>
<feature type="transmembrane region" description="Helical" evidence="1">
    <location>
        <begin position="172"/>
        <end position="192"/>
    </location>
</feature>
<feature type="transmembrane region" description="Helical" evidence="1">
    <location>
        <begin position="223"/>
        <end position="243"/>
    </location>
</feature>
<evidence type="ECO:0000255" key="1">
    <source>
        <dbReference type="HAMAP-Rule" id="MF_00719"/>
    </source>
</evidence>
<keyword id="KW-1003">Cell membrane</keyword>
<keyword id="KW-0169">Cobalamin biosynthesis</keyword>
<keyword id="KW-0460">Magnesium</keyword>
<keyword id="KW-0472">Membrane</keyword>
<keyword id="KW-1185">Reference proteome</keyword>
<keyword id="KW-0808">Transferase</keyword>
<keyword id="KW-0812">Transmembrane</keyword>
<keyword id="KW-1133">Transmembrane helix</keyword>
<reference key="1">
    <citation type="submission" date="2007-10" db="EMBL/GenBank/DDBJ databases">
        <title>Complete genome of Alkaliphilus oremlandii OhILAs.</title>
        <authorList>
            <person name="Copeland A."/>
            <person name="Lucas S."/>
            <person name="Lapidus A."/>
            <person name="Barry K."/>
            <person name="Detter J.C."/>
            <person name="Glavina del Rio T."/>
            <person name="Hammon N."/>
            <person name="Israni S."/>
            <person name="Dalin E."/>
            <person name="Tice H."/>
            <person name="Pitluck S."/>
            <person name="Chain P."/>
            <person name="Malfatti S."/>
            <person name="Shin M."/>
            <person name="Vergez L."/>
            <person name="Schmutz J."/>
            <person name="Larimer F."/>
            <person name="Land M."/>
            <person name="Hauser L."/>
            <person name="Kyrpides N."/>
            <person name="Mikhailova N."/>
            <person name="Stolz J.F."/>
            <person name="Dawson A."/>
            <person name="Fisher E."/>
            <person name="Crable B."/>
            <person name="Perera E."/>
            <person name="Lisak J."/>
            <person name="Ranganathan M."/>
            <person name="Basu P."/>
            <person name="Richardson P."/>
        </authorList>
    </citation>
    <scope>NUCLEOTIDE SEQUENCE [LARGE SCALE GENOMIC DNA]</scope>
    <source>
        <strain>OhILAs</strain>
    </source>
</reference>